<sequence length="1118" mass="124488">MKKANRSAGSVPKVSGISKPQTVEKSKPENSSSAPTGVKPVRPGAAAALSKTKSNDDLLAGMAGGVNVTNGIKAKKSTCSSAAPSAPAPAMTISENKSKISTGTSSSAKRSTSAGNKESSSTRERLRERTRLNQSKKLPSVSQGANDVALAKRSRSRTAAEGDIRMSKSKSDNQISDKAALEAKVKDLLTLAKTKDVEILHLRNELRDMRAQLGISEDHCEGEDRSEVKETIIAHQPTDVESTLLQLQEQNTAIREELNQLKNENRMLKDRLNALGFSLEQRLDNSEKLFGYQSLSPEITPGNQSDGGGTLTSSVEGSAPGSVEDLLSQDENTLMDHQHSNSMDNLDSECSEVYQPLTSSDDALDAPSSSESEGVPSIERSRKGSSGNASEVSVACLTERIHQMEENQHSTSEELQATLQELADLQQITQELNSENERLGEEKVILMESLCQQSDKLEHFGRQIEYFRSLLDEHHISYVIDEDVKSGRYMELEQRYMDLAENARFEREQLLGVQQHLSNTLKMAEQDNKEAQEMIGALKERSHHMERIIESEQKGKAALAATLEEYKATVASDQIEMNRLKAQLENEKQKVAELYSIHNSGDKSDIQDLLESVRLDKEKAETLASSLQEDLAHTRNDANRLQDTIAKVEDEYRAFQEEAKKQIEDLNMTLEKLRSELEEKDTERSDMKETIFELEDEVEQHRAVKLHDNLIISDLENTVKKLQDQKHDMEREIKTLHRRLREESAEWRQFQADLQTAVVIANDIKSEAQEEIGDLKRRLHEAQEKNEKLTKELEEIKSRKQEEERGRVYNYMNAVERDLAALRQGMGLSRRSSTSSEPTPTVKTLIKSFDSASQVPNAAAAAIPRTPLSPSPMKTPPAAAVSPMQRHSISGPISTSKPLTALSDKRSNYGELPVQEHLLRTSSTSRPASLPRVPAMESAKTISVSRRSSEEMKRDISASEGASPASLMAMGTTSPQLSLSSSPTASVTPSTRSRIREERKDPLSALAREYGGSKRNALLKWCQKKTEGYQNIDITNFSSSWNDGLAFCALLHTYLPAHIPYQELNSQDKKRNFTLAFQAAESVGIKSTLDINEMARTERPDWQNVMLYVTAIYKYFET</sequence>
<feature type="chain" id="PRO_0000231019" description="Cytospin-A">
    <location>
        <begin position="1"/>
        <end position="1118"/>
    </location>
</feature>
<feature type="domain" description="Calponin-homology (CH)" evidence="4">
    <location>
        <begin position="1012"/>
        <end position="1117"/>
    </location>
</feature>
<feature type="region of interest" description="Disordered" evidence="5">
    <location>
        <begin position="1"/>
        <end position="63"/>
    </location>
</feature>
<feature type="region of interest" description="Disordered" evidence="5">
    <location>
        <begin position="75"/>
        <end position="176"/>
    </location>
</feature>
<feature type="region of interest" description="Disordered" evidence="5">
    <location>
        <begin position="294"/>
        <end position="324"/>
    </location>
</feature>
<feature type="region of interest" description="Disordered" evidence="5">
    <location>
        <begin position="359"/>
        <end position="391"/>
    </location>
</feature>
<feature type="region of interest" description="Disordered" evidence="5">
    <location>
        <begin position="921"/>
        <end position="999"/>
    </location>
</feature>
<feature type="coiled-coil region" evidence="3">
    <location>
        <begin position="168"/>
        <end position="281"/>
    </location>
</feature>
<feature type="coiled-coil region" evidence="3">
    <location>
        <begin position="395"/>
        <end position="450"/>
    </location>
</feature>
<feature type="coiled-coil region" evidence="3">
    <location>
        <begin position="488"/>
        <end position="808"/>
    </location>
</feature>
<feature type="compositionally biased region" description="Low complexity" evidence="5">
    <location>
        <begin position="80"/>
        <end position="90"/>
    </location>
</feature>
<feature type="compositionally biased region" description="Polar residues" evidence="5">
    <location>
        <begin position="93"/>
        <end position="117"/>
    </location>
</feature>
<feature type="compositionally biased region" description="Basic and acidic residues" evidence="5">
    <location>
        <begin position="120"/>
        <end position="131"/>
    </location>
</feature>
<feature type="compositionally biased region" description="Polar residues" evidence="5">
    <location>
        <begin position="133"/>
        <end position="145"/>
    </location>
</feature>
<feature type="compositionally biased region" description="Basic and acidic residues" evidence="5">
    <location>
        <begin position="158"/>
        <end position="171"/>
    </location>
</feature>
<feature type="compositionally biased region" description="Polar residues" evidence="5">
    <location>
        <begin position="294"/>
        <end position="304"/>
    </location>
</feature>
<feature type="compositionally biased region" description="Low complexity" evidence="5">
    <location>
        <begin position="359"/>
        <end position="373"/>
    </location>
</feature>
<feature type="compositionally biased region" description="Basic and acidic residues" evidence="5">
    <location>
        <begin position="947"/>
        <end position="957"/>
    </location>
</feature>
<feature type="compositionally biased region" description="Low complexity" evidence="5">
    <location>
        <begin position="972"/>
        <end position="992"/>
    </location>
</feature>
<feature type="modified residue" description="Phosphoserine" evidence="8">
    <location>
        <position position="385"/>
    </location>
</feature>
<feature type="modified residue" description="Phosphoserine" evidence="8">
    <location>
        <position position="386"/>
    </location>
</feature>
<feature type="modified residue" description="Phosphoserine" evidence="8">
    <location>
        <position position="390"/>
    </location>
</feature>
<feature type="modified residue" description="Phosphoserine" evidence="2">
    <location>
        <position position="869"/>
    </location>
</feature>
<feature type="modified residue" description="Phosphoserine" evidence="2">
    <location>
        <position position="882"/>
    </location>
</feature>
<feature type="modified residue" description="Phosphoserine" evidence="8">
    <location>
        <position position="888"/>
    </location>
</feature>
<proteinExistence type="evidence at protein level"/>
<gene>
    <name type="primary">Specc1l</name>
    <name type="synonym">Cytsa</name>
    <name type="synonym">Kiaa0376</name>
</gene>
<name>CYTSA_MOUSE</name>
<evidence type="ECO:0000250" key="1"/>
<evidence type="ECO:0000250" key="2">
    <source>
        <dbReference type="UniProtKB" id="Q69YQ0"/>
    </source>
</evidence>
<evidence type="ECO:0000255" key="3"/>
<evidence type="ECO:0000255" key="4">
    <source>
        <dbReference type="PROSITE-ProRule" id="PRU00044"/>
    </source>
</evidence>
<evidence type="ECO:0000256" key="5">
    <source>
        <dbReference type="SAM" id="MobiDB-lite"/>
    </source>
</evidence>
<evidence type="ECO:0000269" key="6">
    <source>
    </source>
</evidence>
<evidence type="ECO:0000305" key="7"/>
<evidence type="ECO:0007744" key="8">
    <source>
    </source>
</evidence>
<protein>
    <recommendedName>
        <fullName>Cytospin-A</fullName>
    </recommendedName>
    <alternativeName>
        <fullName>SPECC1-like protein</fullName>
    </alternativeName>
    <alternativeName>
        <fullName>Sperm antigen with calponin homology and coiled-coil domains 1-like</fullName>
    </alternativeName>
</protein>
<keyword id="KW-0131">Cell cycle</keyword>
<keyword id="KW-0132">Cell division</keyword>
<keyword id="KW-0965">Cell junction</keyword>
<keyword id="KW-0175">Coiled coil</keyword>
<keyword id="KW-0963">Cytoplasm</keyword>
<keyword id="KW-0206">Cytoskeleton</keyword>
<keyword id="KW-0303">Gap junction</keyword>
<keyword id="KW-0597">Phosphoprotein</keyword>
<keyword id="KW-1185">Reference proteome</keyword>
<accession>Q2KN98</accession>
<accession>Q8CHF9</accession>
<comment type="function">
    <text evidence="1">Involved in cytokinesis and spindle organization. May play a role in actin cytoskeleton organization and microtubule stabilization and hence required for proper cell adhesion and migration (By similarity).</text>
</comment>
<comment type="subunit">
    <text>May interact with both microtubules and actin cytoskeleton.</text>
</comment>
<comment type="subcellular location">
    <subcellularLocation>
        <location evidence="6">Cytoplasm</location>
        <location evidence="6">Cytoskeleton</location>
    </subcellularLocation>
    <subcellularLocation>
        <location evidence="1">Cytoplasm</location>
        <location evidence="1">Cytoskeleton</location>
        <location evidence="1">Spindle</location>
    </subcellularLocation>
    <subcellularLocation>
        <location evidence="1">Cell junction</location>
        <location evidence="1">Gap junction</location>
    </subcellularLocation>
    <text evidence="1">Colocalizes with beta-tubulin, acetylated alpha-tubulin and F-actin. Also observed in a ring around gamma-tubulin containing centrioles possibly in the microtubule organizing center (By similarity).</text>
</comment>
<comment type="developmental stage">
    <text evidence="6">At 9.5-10.5 dpc, expressed in the developing maxillary prominence and the lateral nasal process, as well as in the limbs and eye.</text>
</comment>
<comment type="similarity">
    <text evidence="7">Belongs to the cytospin-A family.</text>
</comment>
<comment type="sequence caution" evidence="7">
    <conflict type="erroneous initiation">
        <sequence resource="EMBL-CDS" id="BAC41420"/>
    </conflict>
    <text>Extended N-terminus.</text>
</comment>
<organism>
    <name type="scientific">Mus musculus</name>
    <name type="common">Mouse</name>
    <dbReference type="NCBI Taxonomy" id="10090"/>
    <lineage>
        <taxon>Eukaryota</taxon>
        <taxon>Metazoa</taxon>
        <taxon>Chordata</taxon>
        <taxon>Craniata</taxon>
        <taxon>Vertebrata</taxon>
        <taxon>Euteleostomi</taxon>
        <taxon>Mammalia</taxon>
        <taxon>Eutheria</taxon>
        <taxon>Euarchontoglires</taxon>
        <taxon>Glires</taxon>
        <taxon>Rodentia</taxon>
        <taxon>Myomorpha</taxon>
        <taxon>Muroidea</taxon>
        <taxon>Muridae</taxon>
        <taxon>Murinae</taxon>
        <taxon>Mus</taxon>
        <taxon>Mus</taxon>
    </lineage>
</organism>
<reference key="1">
    <citation type="submission" date="2005-01" db="EMBL/GenBank/DDBJ databases">
        <title>Characterization of cytospin A as a multiple coiled coil protein involved in cytokinesis and spindle organization.</title>
        <authorList>
            <person name="Huang C.-H."/>
            <person name="Ye T."/>
            <person name="Chen Y."/>
        </authorList>
    </citation>
    <scope>NUCLEOTIDE SEQUENCE [MRNA]</scope>
</reference>
<reference key="2">
    <citation type="journal article" date="2002" name="DNA Res.">
        <title>Prediction of the coding sequences of mouse homologues of KIAA gene: I. The complete nucleotide sequences of 100 mouse KIAA-homologous cDNAs identified by screening of terminal sequences of cDNA clones randomly sampled from size-fractionated libraries.</title>
        <authorList>
            <person name="Okazaki N."/>
            <person name="Kikuno R."/>
            <person name="Ohara R."/>
            <person name="Inamoto S."/>
            <person name="Hara Y."/>
            <person name="Nagase T."/>
            <person name="Ohara O."/>
            <person name="Koga H."/>
        </authorList>
    </citation>
    <scope>NUCLEOTIDE SEQUENCE [LARGE SCALE MRNA]</scope>
    <source>
        <tissue>Brain</tissue>
    </source>
</reference>
<reference key="3">
    <citation type="journal article" date="2007" name="Proc. Natl. Acad. Sci. U.S.A.">
        <title>Large-scale phosphorylation analysis of mouse liver.</title>
        <authorList>
            <person name="Villen J."/>
            <person name="Beausoleil S.A."/>
            <person name="Gerber S.A."/>
            <person name="Gygi S.P."/>
        </authorList>
    </citation>
    <scope>IDENTIFICATION BY MASS SPECTROMETRY [LARGE SCALE ANALYSIS]</scope>
    <source>
        <tissue>Liver</tissue>
    </source>
</reference>
<reference key="4">
    <citation type="journal article" date="2010" name="Cell">
        <title>A tissue-specific atlas of mouse protein phosphorylation and expression.</title>
        <authorList>
            <person name="Huttlin E.L."/>
            <person name="Jedrychowski M.P."/>
            <person name="Elias J.E."/>
            <person name="Goswami T."/>
            <person name="Rad R."/>
            <person name="Beausoleil S.A."/>
            <person name="Villen J."/>
            <person name="Haas W."/>
            <person name="Sowa M.E."/>
            <person name="Gygi S.P."/>
        </authorList>
    </citation>
    <scope>PHOSPHORYLATION [LARGE SCALE ANALYSIS] AT SER-385; SER-386; SER-390 AND SER-888</scope>
    <scope>IDENTIFICATION BY MASS SPECTROMETRY [LARGE SCALE ANALYSIS]</scope>
    <source>
        <tissue>Brain</tissue>
        <tissue>Brown adipose tissue</tissue>
        <tissue>Heart</tissue>
        <tissue>Kidney</tissue>
        <tissue>Liver</tissue>
        <tissue>Lung</tissue>
        <tissue>Pancreas</tissue>
        <tissue>Spleen</tissue>
        <tissue>Testis</tissue>
    </source>
</reference>
<reference key="5">
    <citation type="journal article" date="2011" name="Am. J. Hum. Genet.">
        <title>Deficiency of the cytoskeletal protein SPECC1L leads to oblique facial clefting.</title>
        <authorList>
            <person name="Saadi I."/>
            <person name="Alkuraya F.S."/>
            <person name="Gisselbrecht S.S."/>
            <person name="Goessling W."/>
            <person name="Cavallesco R."/>
            <person name="Turbe-Doan A."/>
            <person name="Petrin A.L."/>
            <person name="Harris J."/>
            <person name="Siddiqui U."/>
            <person name="Grix A.W. Jr."/>
            <person name="Hove H.D."/>
            <person name="Leboulch P."/>
            <person name="Glover T.W."/>
            <person name="Morton C.C."/>
            <person name="Richieri-Costa A."/>
            <person name="Murray J.C."/>
            <person name="Erickson R.P."/>
            <person name="Maas R.L."/>
        </authorList>
    </citation>
    <scope>SUBCELLULAR LOCATION</scope>
    <scope>DEVELOPMENTAL STAGE</scope>
</reference>
<dbReference type="EMBL" id="AY884297">
    <property type="protein sequence ID" value="AAX84188.1"/>
    <property type="molecule type" value="mRNA"/>
</dbReference>
<dbReference type="EMBL" id="AB093236">
    <property type="protein sequence ID" value="BAC41420.1"/>
    <property type="status" value="ALT_INIT"/>
    <property type="molecule type" value="mRNA"/>
</dbReference>
<dbReference type="CCDS" id="CCDS48599.1"/>
<dbReference type="RefSeq" id="NP_001139298.1">
    <property type="nucleotide sequence ID" value="NM_001145826.1"/>
</dbReference>
<dbReference type="RefSeq" id="NP_700455.3">
    <property type="nucleotide sequence ID" value="NM_153406.3"/>
</dbReference>
<dbReference type="RefSeq" id="XP_006514315.1">
    <property type="nucleotide sequence ID" value="XM_006514252.5"/>
</dbReference>
<dbReference type="RefSeq" id="XP_011241891.1">
    <property type="nucleotide sequence ID" value="XM_011243589.2"/>
</dbReference>
<dbReference type="RefSeq" id="XP_017169616.1">
    <property type="nucleotide sequence ID" value="XM_017314127.2"/>
</dbReference>
<dbReference type="RefSeq" id="XP_030101193.1">
    <property type="nucleotide sequence ID" value="XM_030245333.2"/>
</dbReference>
<dbReference type="RefSeq" id="XP_036011955.1">
    <property type="nucleotide sequence ID" value="XM_036156062.1"/>
</dbReference>
<dbReference type="SMR" id="Q2KN98"/>
<dbReference type="BioGRID" id="216715">
    <property type="interactions" value="12"/>
</dbReference>
<dbReference type="FunCoup" id="Q2KN98">
    <property type="interactions" value="2494"/>
</dbReference>
<dbReference type="IntAct" id="Q2KN98">
    <property type="interactions" value="3"/>
</dbReference>
<dbReference type="STRING" id="10090.ENSMUSP00000101061"/>
<dbReference type="GlyGen" id="Q2KN98">
    <property type="glycosylation" value="4 sites, 1 N-linked glycan (1 site), 1 O-linked glycan (1 site)"/>
</dbReference>
<dbReference type="iPTMnet" id="Q2KN98"/>
<dbReference type="PhosphoSitePlus" id="Q2KN98"/>
<dbReference type="jPOST" id="Q2KN98"/>
<dbReference type="PaxDb" id="10090-ENSMUSP00000045099"/>
<dbReference type="PeptideAtlas" id="Q2KN98"/>
<dbReference type="ProteomicsDB" id="279140"/>
<dbReference type="Pumba" id="Q2KN98"/>
<dbReference type="DNASU" id="74392"/>
<dbReference type="Ensembl" id="ENSMUST00000218766.2">
    <property type="protein sequence ID" value="ENSMUSP00000151322.2"/>
    <property type="gene ID" value="ENSMUSG00000033444.15"/>
</dbReference>
<dbReference type="GeneID" id="74392"/>
<dbReference type="KEGG" id="mmu:74392"/>
<dbReference type="UCSC" id="uc007fqe.2">
    <property type="organism name" value="mouse"/>
</dbReference>
<dbReference type="AGR" id="MGI:1921642"/>
<dbReference type="CTD" id="23384"/>
<dbReference type="MGI" id="MGI:1921642">
    <property type="gene designation" value="Specc1l"/>
</dbReference>
<dbReference type="VEuPathDB" id="HostDB:ENSMUSG00000033444"/>
<dbReference type="eggNOG" id="KOG4678">
    <property type="taxonomic scope" value="Eukaryota"/>
</dbReference>
<dbReference type="GeneTree" id="ENSGT00940000153592"/>
<dbReference type="HOGENOM" id="CLU_009328_1_0_1"/>
<dbReference type="InParanoid" id="Q2KN98"/>
<dbReference type="OrthoDB" id="21607at2759"/>
<dbReference type="PhylomeDB" id="Q2KN98"/>
<dbReference type="TreeFam" id="TF316716"/>
<dbReference type="BioGRID-ORCS" id="74392">
    <property type="hits" value="2 hits in 76 CRISPR screens"/>
</dbReference>
<dbReference type="ChiTaRS" id="Specc1l">
    <property type="organism name" value="mouse"/>
</dbReference>
<dbReference type="PRO" id="PR:Q2KN98"/>
<dbReference type="Proteomes" id="UP000000589">
    <property type="component" value="Chromosome 10"/>
</dbReference>
<dbReference type="RNAct" id="Q2KN98">
    <property type="molecule type" value="protein"/>
</dbReference>
<dbReference type="Bgee" id="ENSMUSG00000033444">
    <property type="expression patterns" value="Expressed in otolith organ and 226 other cell types or tissues"/>
</dbReference>
<dbReference type="ExpressionAtlas" id="Q2KN98">
    <property type="expression patterns" value="baseline and differential"/>
</dbReference>
<dbReference type="GO" id="GO:0015629">
    <property type="term" value="C:actin cytoskeleton"/>
    <property type="evidence" value="ECO:0000314"/>
    <property type="project" value="MGI"/>
</dbReference>
<dbReference type="GO" id="GO:0005911">
    <property type="term" value="C:cell-cell junction"/>
    <property type="evidence" value="ECO:0000314"/>
    <property type="project" value="MGI"/>
</dbReference>
<dbReference type="GO" id="GO:0005737">
    <property type="term" value="C:cytoplasm"/>
    <property type="evidence" value="ECO:0000314"/>
    <property type="project" value="MGI"/>
</dbReference>
<dbReference type="GO" id="GO:0031941">
    <property type="term" value="C:filamentous actin"/>
    <property type="evidence" value="ECO:0000314"/>
    <property type="project" value="MGI"/>
</dbReference>
<dbReference type="GO" id="GO:0005921">
    <property type="term" value="C:gap junction"/>
    <property type="evidence" value="ECO:0007669"/>
    <property type="project" value="UniProtKB-SubCell"/>
</dbReference>
<dbReference type="GO" id="GO:0015630">
    <property type="term" value="C:microtubule cytoskeleton"/>
    <property type="evidence" value="ECO:0000314"/>
    <property type="project" value="MGI"/>
</dbReference>
<dbReference type="GO" id="GO:0005815">
    <property type="term" value="C:microtubule organizing center"/>
    <property type="evidence" value="ECO:0000314"/>
    <property type="project" value="MGI"/>
</dbReference>
<dbReference type="GO" id="GO:0005819">
    <property type="term" value="C:spindle"/>
    <property type="evidence" value="ECO:0007669"/>
    <property type="project" value="UniProtKB-SubCell"/>
</dbReference>
<dbReference type="GO" id="GO:0008013">
    <property type="term" value="F:beta-catenin binding"/>
    <property type="evidence" value="ECO:0000353"/>
    <property type="project" value="MGI"/>
</dbReference>
<dbReference type="GO" id="GO:0030036">
    <property type="term" value="P:actin cytoskeleton organization"/>
    <property type="evidence" value="ECO:0000315"/>
    <property type="project" value="MGI"/>
</dbReference>
<dbReference type="GO" id="GO:0034332">
    <property type="term" value="P:adherens junction organization"/>
    <property type="evidence" value="ECO:0000315"/>
    <property type="project" value="MGI"/>
</dbReference>
<dbReference type="GO" id="GO:0061713">
    <property type="term" value="P:anterior neural tube closure"/>
    <property type="evidence" value="ECO:0000315"/>
    <property type="project" value="MGI"/>
</dbReference>
<dbReference type="GO" id="GO:0007155">
    <property type="term" value="P:cell adhesion"/>
    <property type="evidence" value="ECO:0000266"/>
    <property type="project" value="MGI"/>
</dbReference>
<dbReference type="GO" id="GO:0051301">
    <property type="term" value="P:cell division"/>
    <property type="evidence" value="ECO:0007669"/>
    <property type="project" value="UniProtKB-KW"/>
</dbReference>
<dbReference type="GO" id="GO:0016477">
    <property type="term" value="P:cell migration"/>
    <property type="evidence" value="ECO:0000315"/>
    <property type="project" value="MGI"/>
</dbReference>
<dbReference type="GO" id="GO:0060325">
    <property type="term" value="P:face morphogenesis"/>
    <property type="evidence" value="ECO:0000266"/>
    <property type="project" value="MGI"/>
</dbReference>
<dbReference type="GO" id="GO:0030835">
    <property type="term" value="P:negative regulation of actin filament depolymerization"/>
    <property type="evidence" value="ECO:0000314"/>
    <property type="project" value="MGI"/>
</dbReference>
<dbReference type="GO" id="GO:0007026">
    <property type="term" value="P:negative regulation of microtubule depolymerization"/>
    <property type="evidence" value="ECO:0000314"/>
    <property type="project" value="MGI"/>
</dbReference>
<dbReference type="GO" id="GO:0036032">
    <property type="term" value="P:neural crest cell delamination"/>
    <property type="evidence" value="ECO:0000315"/>
    <property type="project" value="MGI"/>
</dbReference>
<dbReference type="GO" id="GO:0051897">
    <property type="term" value="P:positive regulation of phosphatidylinositol 3-kinase/protein kinase B signal transduction"/>
    <property type="evidence" value="ECO:0000315"/>
    <property type="project" value="MGI"/>
</dbReference>
<dbReference type="CDD" id="cd21199">
    <property type="entry name" value="CH_CYTS"/>
    <property type="match status" value="1"/>
</dbReference>
<dbReference type="FunFam" id="1.10.418.10:FF:000020">
    <property type="entry name" value="Cytospin-A isoform 1"/>
    <property type="match status" value="1"/>
</dbReference>
<dbReference type="Gene3D" id="1.10.418.10">
    <property type="entry name" value="Calponin-like domain"/>
    <property type="match status" value="1"/>
</dbReference>
<dbReference type="InterPro" id="IPR001715">
    <property type="entry name" value="CH_dom"/>
</dbReference>
<dbReference type="InterPro" id="IPR036872">
    <property type="entry name" value="CH_dom_sf"/>
</dbReference>
<dbReference type="InterPro" id="IPR050540">
    <property type="entry name" value="F-actin_Monoox_Mical"/>
</dbReference>
<dbReference type="PANTHER" id="PTHR23167">
    <property type="entry name" value="CALPONIN HOMOLOGY DOMAIN-CONTAINING PROTEIN DDB_G0272472-RELATED"/>
    <property type="match status" value="1"/>
</dbReference>
<dbReference type="PANTHER" id="PTHR23167:SF18">
    <property type="entry name" value="CYTOSPIN-A"/>
    <property type="match status" value="1"/>
</dbReference>
<dbReference type="Pfam" id="PF00307">
    <property type="entry name" value="CH"/>
    <property type="match status" value="1"/>
</dbReference>
<dbReference type="SMART" id="SM00033">
    <property type="entry name" value="CH"/>
    <property type="match status" value="1"/>
</dbReference>
<dbReference type="SUPFAM" id="SSF47576">
    <property type="entry name" value="Calponin-homology domain, CH-domain"/>
    <property type="match status" value="1"/>
</dbReference>
<dbReference type="PROSITE" id="PS50021">
    <property type="entry name" value="CH"/>
    <property type="match status" value="1"/>
</dbReference>